<evidence type="ECO:0000255" key="1">
    <source>
        <dbReference type="HAMAP-Rule" id="MF_01145"/>
    </source>
</evidence>
<evidence type="ECO:0000256" key="2">
    <source>
        <dbReference type="SAM" id="MobiDB-lite"/>
    </source>
</evidence>
<proteinExistence type="inferred from homology"/>
<name>PRSA_STREM</name>
<organism>
    <name type="scientific">Streptococcus equi subsp. zooepidemicus (strain MGCS10565)</name>
    <dbReference type="NCBI Taxonomy" id="552526"/>
    <lineage>
        <taxon>Bacteria</taxon>
        <taxon>Bacillati</taxon>
        <taxon>Bacillota</taxon>
        <taxon>Bacilli</taxon>
        <taxon>Lactobacillales</taxon>
        <taxon>Streptococcaceae</taxon>
        <taxon>Streptococcus</taxon>
    </lineage>
</organism>
<sequence length="333" mass="36574">MKKSTKLLAGIVTLASAMTLAACQSTNDNTSVITMKGDTISVSDFYNETKNTEISQRAMLNLVVSRVFEDQYGKKVSKKKTEEAYNKSAEQYGASFSAALAQSGLTTDTYKRQIRSAMLVEYAVKEAAKKELTDADYKKAYESYTPEMTTQVITLDNEETAKAILGEVKAEGADFAAIAKEKTTAADKKVDYKFDSGDTKLPADVIKAASGLKEGDISEVVSVLDPATYQNKFYIVKVTKKAEKASDWKKYKKRLKEIVLAEKTQNIDFQNKVIAKALDKANVKIKDQAFANILAQYANTDKKASKANTSKSDQKTSSDSSKDSQSSKSKSEK</sequence>
<reference key="1">
    <citation type="journal article" date="2008" name="PLoS ONE">
        <title>Genome sequence of a lancefield group C Streptococcus zooepidemicus strain causing epidemic nephritis: new information about an old disease.</title>
        <authorList>
            <person name="Beres S.B."/>
            <person name="Sesso R."/>
            <person name="Pinto S.W.L."/>
            <person name="Hoe N.P."/>
            <person name="Porcella S.F."/>
            <person name="Deleo F.R."/>
            <person name="Musser J.M."/>
        </authorList>
    </citation>
    <scope>NUCLEOTIDE SEQUENCE [LARGE SCALE GENOMIC DNA]</scope>
    <source>
        <strain>MGCS10565</strain>
    </source>
</reference>
<comment type="function">
    <text evidence="1">Plays a major role in protein secretion by helping the post-translocational extracellular folding of several secreted proteins.</text>
</comment>
<comment type="catalytic activity">
    <reaction evidence="1">
        <text>[protein]-peptidylproline (omega=180) = [protein]-peptidylproline (omega=0)</text>
        <dbReference type="Rhea" id="RHEA:16237"/>
        <dbReference type="Rhea" id="RHEA-COMP:10747"/>
        <dbReference type="Rhea" id="RHEA-COMP:10748"/>
        <dbReference type="ChEBI" id="CHEBI:83833"/>
        <dbReference type="ChEBI" id="CHEBI:83834"/>
        <dbReference type="EC" id="5.2.1.8"/>
    </reaction>
</comment>
<comment type="subcellular location">
    <subcellularLocation>
        <location evidence="1">Cell membrane</location>
        <topology evidence="1">Lipid-anchor</topology>
    </subcellularLocation>
</comment>
<comment type="similarity">
    <text evidence="1">Belongs to the PrsA family.</text>
</comment>
<gene>
    <name evidence="1" type="primary">prsA</name>
    <name type="ordered locus">Sez_0666</name>
</gene>
<feature type="signal peptide" evidence="1">
    <location>
        <begin position="1"/>
        <end position="22"/>
    </location>
</feature>
<feature type="chain" id="PRO_1000137385" description="Foldase protein PrsA">
    <location>
        <begin position="23"/>
        <end position="333"/>
    </location>
</feature>
<feature type="domain" description="PpiC" evidence="1">
    <location>
        <begin position="145"/>
        <end position="240"/>
    </location>
</feature>
<feature type="region of interest" description="Disordered" evidence="2">
    <location>
        <begin position="301"/>
        <end position="333"/>
    </location>
</feature>
<feature type="compositionally biased region" description="Basic and acidic residues" evidence="2">
    <location>
        <begin position="312"/>
        <end position="322"/>
    </location>
</feature>
<feature type="compositionally biased region" description="Low complexity" evidence="2">
    <location>
        <begin position="323"/>
        <end position="333"/>
    </location>
</feature>
<feature type="lipid moiety-binding region" description="N-palmitoyl cysteine" evidence="1">
    <location>
        <position position="23"/>
    </location>
</feature>
<feature type="lipid moiety-binding region" description="S-diacylglycerol cysteine" evidence="1">
    <location>
        <position position="23"/>
    </location>
</feature>
<dbReference type="EC" id="5.2.1.8" evidence="1"/>
<dbReference type="EMBL" id="CP001129">
    <property type="protein sequence ID" value="ACG62031.1"/>
    <property type="molecule type" value="Genomic_DNA"/>
</dbReference>
<dbReference type="RefSeq" id="WP_012515307.1">
    <property type="nucleotide sequence ID" value="NC_011134.1"/>
</dbReference>
<dbReference type="SMR" id="B4U214"/>
<dbReference type="KEGG" id="sez:Sez_0666"/>
<dbReference type="HOGENOM" id="CLU_034646_6_0_9"/>
<dbReference type="Proteomes" id="UP000001873">
    <property type="component" value="Chromosome"/>
</dbReference>
<dbReference type="GO" id="GO:0005886">
    <property type="term" value="C:plasma membrane"/>
    <property type="evidence" value="ECO:0007669"/>
    <property type="project" value="UniProtKB-SubCell"/>
</dbReference>
<dbReference type="GO" id="GO:0003755">
    <property type="term" value="F:peptidyl-prolyl cis-trans isomerase activity"/>
    <property type="evidence" value="ECO:0007669"/>
    <property type="project" value="UniProtKB-UniRule"/>
</dbReference>
<dbReference type="GO" id="GO:0006457">
    <property type="term" value="P:protein folding"/>
    <property type="evidence" value="ECO:0007669"/>
    <property type="project" value="UniProtKB-UniRule"/>
</dbReference>
<dbReference type="Gene3D" id="3.10.50.40">
    <property type="match status" value="1"/>
</dbReference>
<dbReference type="HAMAP" id="MF_01145">
    <property type="entry name" value="Foldase_PrsA"/>
    <property type="match status" value="1"/>
</dbReference>
<dbReference type="InterPro" id="IPR023059">
    <property type="entry name" value="Foldase_PrsA"/>
</dbReference>
<dbReference type="InterPro" id="IPR046357">
    <property type="entry name" value="PPIase_dom_sf"/>
</dbReference>
<dbReference type="InterPro" id="IPR000297">
    <property type="entry name" value="PPIase_PpiC"/>
</dbReference>
<dbReference type="InterPro" id="IPR050245">
    <property type="entry name" value="PrsA_foldase"/>
</dbReference>
<dbReference type="InterPro" id="IPR027304">
    <property type="entry name" value="Trigger_fact/SurA_dom_sf"/>
</dbReference>
<dbReference type="NCBIfam" id="NF002361">
    <property type="entry name" value="PRK01326.1"/>
    <property type="match status" value="1"/>
</dbReference>
<dbReference type="NCBIfam" id="NF009105">
    <property type="entry name" value="PRK12450.1"/>
    <property type="match status" value="1"/>
</dbReference>
<dbReference type="PANTHER" id="PTHR47245:SF1">
    <property type="entry name" value="FOLDASE PROTEIN PRSA"/>
    <property type="match status" value="1"/>
</dbReference>
<dbReference type="PANTHER" id="PTHR47245">
    <property type="entry name" value="PEPTIDYLPROLYL ISOMERASE"/>
    <property type="match status" value="1"/>
</dbReference>
<dbReference type="Pfam" id="PF13145">
    <property type="entry name" value="Rotamase_2"/>
    <property type="match status" value="1"/>
</dbReference>
<dbReference type="SUPFAM" id="SSF54534">
    <property type="entry name" value="FKBP-like"/>
    <property type="match status" value="1"/>
</dbReference>
<dbReference type="SUPFAM" id="SSF109998">
    <property type="entry name" value="Triger factor/SurA peptide-binding domain-like"/>
    <property type="match status" value="1"/>
</dbReference>
<dbReference type="PROSITE" id="PS50198">
    <property type="entry name" value="PPIC_PPIASE_2"/>
    <property type="match status" value="1"/>
</dbReference>
<dbReference type="PROSITE" id="PS51257">
    <property type="entry name" value="PROKAR_LIPOPROTEIN"/>
    <property type="match status" value="1"/>
</dbReference>
<accession>B4U214</accession>
<keyword id="KW-1003">Cell membrane</keyword>
<keyword id="KW-0413">Isomerase</keyword>
<keyword id="KW-0449">Lipoprotein</keyword>
<keyword id="KW-0472">Membrane</keyword>
<keyword id="KW-0564">Palmitate</keyword>
<keyword id="KW-0697">Rotamase</keyword>
<keyword id="KW-0732">Signal</keyword>
<protein>
    <recommendedName>
        <fullName evidence="1">Foldase protein PrsA</fullName>
        <ecNumber evidence="1">5.2.1.8</ecNumber>
    </recommendedName>
</protein>